<accession>A7E449</accession>
<protein>
    <recommendedName>
        <fullName>ATP-dependent RNA helicase dbp2</fullName>
        <ecNumber>3.6.4.13</ecNumber>
    </recommendedName>
</protein>
<organism>
    <name type="scientific">Sclerotinia sclerotiorum (strain ATCC 18683 / 1980 / Ss-1)</name>
    <name type="common">White mold</name>
    <name type="synonym">Whetzelinia sclerotiorum</name>
    <dbReference type="NCBI Taxonomy" id="665079"/>
    <lineage>
        <taxon>Eukaryota</taxon>
        <taxon>Fungi</taxon>
        <taxon>Dikarya</taxon>
        <taxon>Ascomycota</taxon>
        <taxon>Pezizomycotina</taxon>
        <taxon>Leotiomycetes</taxon>
        <taxon>Helotiales</taxon>
        <taxon>Sclerotiniaceae</taxon>
        <taxon>Sclerotinia</taxon>
    </lineage>
</organism>
<feature type="chain" id="PRO_0000310188" description="ATP-dependent RNA helicase dbp2">
    <location>
        <begin position="1"/>
        <end position="572"/>
    </location>
</feature>
<feature type="domain" description="Helicase ATP-binding" evidence="2">
    <location>
        <begin position="180"/>
        <end position="355"/>
    </location>
</feature>
<feature type="domain" description="Helicase C-terminal" evidence="3">
    <location>
        <begin position="383"/>
        <end position="530"/>
    </location>
</feature>
<feature type="region of interest" description="Disordered" evidence="4">
    <location>
        <begin position="547"/>
        <end position="572"/>
    </location>
</feature>
<feature type="short sequence motif" description="Q motif">
    <location>
        <begin position="149"/>
        <end position="177"/>
    </location>
</feature>
<feature type="short sequence motif" description="DEAD box">
    <location>
        <begin position="303"/>
        <end position="306"/>
    </location>
</feature>
<feature type="compositionally biased region" description="Gly residues" evidence="4">
    <location>
        <begin position="547"/>
        <end position="557"/>
    </location>
</feature>
<feature type="binding site" evidence="2">
    <location>
        <begin position="193"/>
        <end position="200"/>
    </location>
    <ligand>
        <name>ATP</name>
        <dbReference type="ChEBI" id="CHEBI:30616"/>
    </ligand>
</feature>
<name>DBP2_SCLS1</name>
<proteinExistence type="inferred from homology"/>
<sequence>MSYGGGYGGGRGGGNGYGNGDSSYGRGNSYSNGYSNGGSNGYSGGGGGGYGGGRGGSGGGNVNGYSGGGGGYGGGGGYGGGGGAGGDRMNNLGANLQKQNWDLNTLPKFEKSFYKEDPVVAARSEEDVAKFRAQHNIAVQGPNIPKPVETFDEAGFPAYVMTEVKAQGFPAPTPIQSQGWPMALSGRDVVGIAETGSGKTLTYCLPAIVHINAQPLLAPGDGPIVLVLAPTRELAVQIQQEITKFGKSSRIRNTCVYGGVPKGGQIRDLAKGVEVCIATPGRLIDMIESGKTNLRRVTYLVLDEADRMLDMGFEPQIRKILGQIRPDRQTCMWSATWPKEVRALASDYLNDFIQVNIGSLELSANHRITQIVEVVSEFEKRDKMTKHLEKIMEDKDNKILIFTGTKRVADDITRFLRQDGWPALSIHGDKQQNERDWVLNEFKTGKSPIMVATDVASRGIDVRNITHVFNYDYPNNSEDYIHRIGRTGRAGQKGTAITLFTTDNQKQARDLVNVLTEAKQVIDPRLAEMTRFGGGGGGRGYGGRGYGGGRGRGGGGNFSSSNAAPLGGGRRW</sequence>
<keyword id="KW-0067">ATP-binding</keyword>
<keyword id="KW-0963">Cytoplasm</keyword>
<keyword id="KW-0347">Helicase</keyword>
<keyword id="KW-0378">Hydrolase</keyword>
<keyword id="KW-0866">Nonsense-mediated mRNA decay</keyword>
<keyword id="KW-0547">Nucleotide-binding</keyword>
<keyword id="KW-0539">Nucleus</keyword>
<keyword id="KW-1185">Reference proteome</keyword>
<keyword id="KW-0690">Ribosome biogenesis</keyword>
<keyword id="KW-0694">RNA-binding</keyword>
<keyword id="KW-0698">rRNA processing</keyword>
<gene>
    <name type="primary">dbp2</name>
    <name type="ORF">SS1G_00071</name>
</gene>
<evidence type="ECO:0000250" key="1"/>
<evidence type="ECO:0000255" key="2">
    <source>
        <dbReference type="PROSITE-ProRule" id="PRU00541"/>
    </source>
</evidence>
<evidence type="ECO:0000255" key="3">
    <source>
        <dbReference type="PROSITE-ProRule" id="PRU00542"/>
    </source>
</evidence>
<evidence type="ECO:0000256" key="4">
    <source>
        <dbReference type="SAM" id="MobiDB-lite"/>
    </source>
</evidence>
<evidence type="ECO:0000305" key="5"/>
<reference key="1">
    <citation type="journal article" date="2011" name="PLoS Genet.">
        <title>Genomic analysis of the necrotrophic fungal pathogens Sclerotinia sclerotiorum and Botrytis cinerea.</title>
        <authorList>
            <person name="Amselem J."/>
            <person name="Cuomo C.A."/>
            <person name="van Kan J.A.L."/>
            <person name="Viaud M."/>
            <person name="Benito E.P."/>
            <person name="Couloux A."/>
            <person name="Coutinho P.M."/>
            <person name="de Vries R.P."/>
            <person name="Dyer P.S."/>
            <person name="Fillinger S."/>
            <person name="Fournier E."/>
            <person name="Gout L."/>
            <person name="Hahn M."/>
            <person name="Kohn L."/>
            <person name="Lapalu N."/>
            <person name="Plummer K.M."/>
            <person name="Pradier J.-M."/>
            <person name="Quevillon E."/>
            <person name="Sharon A."/>
            <person name="Simon A."/>
            <person name="ten Have A."/>
            <person name="Tudzynski B."/>
            <person name="Tudzynski P."/>
            <person name="Wincker P."/>
            <person name="Andrew M."/>
            <person name="Anthouard V."/>
            <person name="Beever R.E."/>
            <person name="Beffa R."/>
            <person name="Benoit I."/>
            <person name="Bouzid O."/>
            <person name="Brault B."/>
            <person name="Chen Z."/>
            <person name="Choquer M."/>
            <person name="Collemare J."/>
            <person name="Cotton P."/>
            <person name="Danchin E.G."/>
            <person name="Da Silva C."/>
            <person name="Gautier A."/>
            <person name="Giraud C."/>
            <person name="Giraud T."/>
            <person name="Gonzalez C."/>
            <person name="Grossetete S."/>
            <person name="Gueldener U."/>
            <person name="Henrissat B."/>
            <person name="Howlett B.J."/>
            <person name="Kodira C."/>
            <person name="Kretschmer M."/>
            <person name="Lappartient A."/>
            <person name="Leroch M."/>
            <person name="Levis C."/>
            <person name="Mauceli E."/>
            <person name="Neuveglise C."/>
            <person name="Oeser B."/>
            <person name="Pearson M."/>
            <person name="Poulain J."/>
            <person name="Poussereau N."/>
            <person name="Quesneville H."/>
            <person name="Rascle C."/>
            <person name="Schumacher J."/>
            <person name="Segurens B."/>
            <person name="Sexton A."/>
            <person name="Silva E."/>
            <person name="Sirven C."/>
            <person name="Soanes D.M."/>
            <person name="Talbot N.J."/>
            <person name="Templeton M."/>
            <person name="Yandava C."/>
            <person name="Yarden O."/>
            <person name="Zeng Q."/>
            <person name="Rollins J.A."/>
            <person name="Lebrun M.-H."/>
            <person name="Dickman M."/>
        </authorList>
    </citation>
    <scope>NUCLEOTIDE SEQUENCE [LARGE SCALE GENOMIC DNA]</scope>
    <source>
        <strain>ATCC 18683 / 1980 / Ss-1</strain>
    </source>
</reference>
<comment type="function">
    <text evidence="1">ATP-dependent RNA helicase involved nonsense-mediated mRNA decay and ribosome biogenesis through rRNA processing.</text>
</comment>
<comment type="catalytic activity">
    <reaction>
        <text>ATP + H2O = ADP + phosphate + H(+)</text>
        <dbReference type="Rhea" id="RHEA:13065"/>
        <dbReference type="ChEBI" id="CHEBI:15377"/>
        <dbReference type="ChEBI" id="CHEBI:15378"/>
        <dbReference type="ChEBI" id="CHEBI:30616"/>
        <dbReference type="ChEBI" id="CHEBI:43474"/>
        <dbReference type="ChEBI" id="CHEBI:456216"/>
        <dbReference type="EC" id="3.6.4.13"/>
    </reaction>
</comment>
<comment type="subunit">
    <text evidence="1">Associates with polysomes.</text>
</comment>
<comment type="subcellular location">
    <subcellularLocation>
        <location evidence="1">Cytoplasm</location>
    </subcellularLocation>
    <subcellularLocation>
        <location evidence="1">Nucleus</location>
    </subcellularLocation>
</comment>
<comment type="domain">
    <text>The Q motif is unique to and characteristic of the DEAD box family of RNA helicases and controls ATP binding and hydrolysis.</text>
</comment>
<comment type="similarity">
    <text evidence="5">Belongs to the DEAD box helicase family. DDX5/DBP2 subfamily.</text>
</comment>
<dbReference type="EC" id="3.6.4.13"/>
<dbReference type="EMBL" id="CH476621">
    <property type="protein sequence ID" value="EDN90671.1"/>
    <property type="molecule type" value="Genomic_DNA"/>
</dbReference>
<dbReference type="RefSeq" id="XP_001597985.1">
    <property type="nucleotide sequence ID" value="XM_001597935.1"/>
</dbReference>
<dbReference type="SMR" id="A7E449"/>
<dbReference type="FunCoup" id="A7E449">
    <property type="interactions" value="1109"/>
</dbReference>
<dbReference type="STRING" id="665079.A7E449"/>
<dbReference type="EnsemblFungi" id="EDN90671">
    <property type="protein sequence ID" value="EDN90671"/>
    <property type="gene ID" value="SS1G_00071"/>
</dbReference>
<dbReference type="GeneID" id="5494656"/>
<dbReference type="KEGG" id="ssl:SS1G_00071"/>
<dbReference type="VEuPathDB" id="FungiDB:sscle_03g029880"/>
<dbReference type="eggNOG" id="KOG0331">
    <property type="taxonomic scope" value="Eukaryota"/>
</dbReference>
<dbReference type="HOGENOM" id="CLU_003041_16_9_1"/>
<dbReference type="InParanoid" id="A7E449"/>
<dbReference type="OMA" id="STMPKFE"/>
<dbReference type="OrthoDB" id="196131at2759"/>
<dbReference type="Proteomes" id="UP000001312">
    <property type="component" value="Unassembled WGS sequence"/>
</dbReference>
<dbReference type="GO" id="GO:0005737">
    <property type="term" value="C:cytoplasm"/>
    <property type="evidence" value="ECO:0000318"/>
    <property type="project" value="GO_Central"/>
</dbReference>
<dbReference type="GO" id="GO:0005634">
    <property type="term" value="C:nucleus"/>
    <property type="evidence" value="ECO:0000318"/>
    <property type="project" value="GO_Central"/>
</dbReference>
<dbReference type="GO" id="GO:1990904">
    <property type="term" value="C:ribonucleoprotein complex"/>
    <property type="evidence" value="ECO:0000318"/>
    <property type="project" value="GO_Central"/>
</dbReference>
<dbReference type="GO" id="GO:0005524">
    <property type="term" value="F:ATP binding"/>
    <property type="evidence" value="ECO:0007669"/>
    <property type="project" value="UniProtKB-KW"/>
</dbReference>
<dbReference type="GO" id="GO:0016887">
    <property type="term" value="F:ATP hydrolysis activity"/>
    <property type="evidence" value="ECO:0007669"/>
    <property type="project" value="RHEA"/>
</dbReference>
<dbReference type="GO" id="GO:0003729">
    <property type="term" value="F:mRNA binding"/>
    <property type="evidence" value="ECO:0000318"/>
    <property type="project" value="GO_Central"/>
</dbReference>
<dbReference type="GO" id="GO:0003724">
    <property type="term" value="F:RNA helicase activity"/>
    <property type="evidence" value="ECO:0000318"/>
    <property type="project" value="GO_Central"/>
</dbReference>
<dbReference type="GO" id="GO:0000380">
    <property type="term" value="P:alternative mRNA splicing, via spliceosome"/>
    <property type="evidence" value="ECO:0000318"/>
    <property type="project" value="GO_Central"/>
</dbReference>
<dbReference type="GO" id="GO:0000184">
    <property type="term" value="P:nuclear-transcribed mRNA catabolic process, nonsense-mediated decay"/>
    <property type="evidence" value="ECO:0007669"/>
    <property type="project" value="UniProtKB-KW"/>
</dbReference>
<dbReference type="GO" id="GO:0006364">
    <property type="term" value="P:rRNA processing"/>
    <property type="evidence" value="ECO:0000318"/>
    <property type="project" value="GO_Central"/>
</dbReference>
<dbReference type="CDD" id="cd17966">
    <property type="entry name" value="DEADc_DDX5_DDX17"/>
    <property type="match status" value="1"/>
</dbReference>
<dbReference type="CDD" id="cd18787">
    <property type="entry name" value="SF2_C_DEAD"/>
    <property type="match status" value="1"/>
</dbReference>
<dbReference type="FunFam" id="3.40.50.300:FF:000008">
    <property type="entry name" value="ATP-dependent RNA helicase RhlB"/>
    <property type="match status" value="1"/>
</dbReference>
<dbReference type="FunFam" id="3.40.50.300:FF:000079">
    <property type="entry name" value="probable ATP-dependent RNA helicase DDX17"/>
    <property type="match status" value="1"/>
</dbReference>
<dbReference type="Gene3D" id="3.40.50.300">
    <property type="entry name" value="P-loop containing nucleotide triphosphate hydrolases"/>
    <property type="match status" value="2"/>
</dbReference>
<dbReference type="InterPro" id="IPR011545">
    <property type="entry name" value="DEAD/DEAH_box_helicase_dom"/>
</dbReference>
<dbReference type="InterPro" id="IPR014001">
    <property type="entry name" value="Helicase_ATP-bd"/>
</dbReference>
<dbReference type="InterPro" id="IPR001650">
    <property type="entry name" value="Helicase_C-like"/>
</dbReference>
<dbReference type="InterPro" id="IPR027417">
    <property type="entry name" value="P-loop_NTPase"/>
</dbReference>
<dbReference type="InterPro" id="IPR000629">
    <property type="entry name" value="RNA-helicase_DEAD-box_CS"/>
</dbReference>
<dbReference type="InterPro" id="IPR014014">
    <property type="entry name" value="RNA_helicase_DEAD_Q_motif"/>
</dbReference>
<dbReference type="PANTHER" id="PTHR47958">
    <property type="entry name" value="ATP-DEPENDENT RNA HELICASE DBP3"/>
    <property type="match status" value="1"/>
</dbReference>
<dbReference type="Pfam" id="PF00270">
    <property type="entry name" value="DEAD"/>
    <property type="match status" value="1"/>
</dbReference>
<dbReference type="Pfam" id="PF00271">
    <property type="entry name" value="Helicase_C"/>
    <property type="match status" value="1"/>
</dbReference>
<dbReference type="SMART" id="SM00487">
    <property type="entry name" value="DEXDc"/>
    <property type="match status" value="1"/>
</dbReference>
<dbReference type="SMART" id="SM00490">
    <property type="entry name" value="HELICc"/>
    <property type="match status" value="1"/>
</dbReference>
<dbReference type="SUPFAM" id="SSF52540">
    <property type="entry name" value="P-loop containing nucleoside triphosphate hydrolases"/>
    <property type="match status" value="1"/>
</dbReference>
<dbReference type="PROSITE" id="PS00039">
    <property type="entry name" value="DEAD_ATP_HELICASE"/>
    <property type="match status" value="1"/>
</dbReference>
<dbReference type="PROSITE" id="PS51192">
    <property type="entry name" value="HELICASE_ATP_BIND_1"/>
    <property type="match status" value="1"/>
</dbReference>
<dbReference type="PROSITE" id="PS51194">
    <property type="entry name" value="HELICASE_CTER"/>
    <property type="match status" value="1"/>
</dbReference>
<dbReference type="PROSITE" id="PS51195">
    <property type="entry name" value="Q_MOTIF"/>
    <property type="match status" value="1"/>
</dbReference>